<feature type="chain" id="PRO_1000049905" description="Tetraacyldisaccharide 4'-kinase">
    <location>
        <begin position="1"/>
        <end position="321"/>
    </location>
</feature>
<feature type="binding site" evidence="1">
    <location>
        <begin position="54"/>
        <end position="61"/>
    </location>
    <ligand>
        <name>ATP</name>
        <dbReference type="ChEBI" id="CHEBI:30616"/>
    </ligand>
</feature>
<reference key="1">
    <citation type="submission" date="2007-09" db="EMBL/GenBank/DDBJ databases">
        <title>Complete genome sequence of Rickettsia rickettsii.</title>
        <authorList>
            <person name="Madan A."/>
            <person name="Fahey J."/>
            <person name="Helton E."/>
            <person name="Ketteman M."/>
            <person name="Madan A."/>
            <person name="Rodrigues S."/>
            <person name="Sanchez A."/>
            <person name="Dasch G."/>
            <person name="Eremeeva M."/>
        </authorList>
    </citation>
    <scope>NUCLEOTIDE SEQUENCE [LARGE SCALE GENOMIC DNA]</scope>
    <source>
        <strain>Sheila Smith</strain>
    </source>
</reference>
<name>LPXK_RICRS</name>
<protein>
    <recommendedName>
        <fullName evidence="1">Tetraacyldisaccharide 4'-kinase</fullName>
        <ecNumber evidence="1">2.7.1.130</ecNumber>
    </recommendedName>
    <alternativeName>
        <fullName evidence="1">Lipid A 4'-kinase</fullName>
    </alternativeName>
</protein>
<dbReference type="EC" id="2.7.1.130" evidence="1"/>
<dbReference type="EMBL" id="CP000848">
    <property type="protein sequence ID" value="ABV76674.1"/>
    <property type="molecule type" value="Genomic_DNA"/>
</dbReference>
<dbReference type="RefSeq" id="WP_012151226.1">
    <property type="nucleotide sequence ID" value="NZ_CP121767.1"/>
</dbReference>
<dbReference type="SMR" id="A8GTE9"/>
<dbReference type="GeneID" id="79937740"/>
<dbReference type="KEGG" id="rri:A1G_06070"/>
<dbReference type="HOGENOM" id="CLU_038816_0_0_5"/>
<dbReference type="UniPathway" id="UPA00359">
    <property type="reaction ID" value="UER00482"/>
</dbReference>
<dbReference type="Proteomes" id="UP000006832">
    <property type="component" value="Chromosome"/>
</dbReference>
<dbReference type="GO" id="GO:0005886">
    <property type="term" value="C:plasma membrane"/>
    <property type="evidence" value="ECO:0007669"/>
    <property type="project" value="TreeGrafter"/>
</dbReference>
<dbReference type="GO" id="GO:0005524">
    <property type="term" value="F:ATP binding"/>
    <property type="evidence" value="ECO:0007669"/>
    <property type="project" value="UniProtKB-UniRule"/>
</dbReference>
<dbReference type="GO" id="GO:0009029">
    <property type="term" value="F:tetraacyldisaccharide 4'-kinase activity"/>
    <property type="evidence" value="ECO:0007669"/>
    <property type="project" value="UniProtKB-UniRule"/>
</dbReference>
<dbReference type="GO" id="GO:0009245">
    <property type="term" value="P:lipid A biosynthetic process"/>
    <property type="evidence" value="ECO:0007669"/>
    <property type="project" value="UniProtKB-UniRule"/>
</dbReference>
<dbReference type="GO" id="GO:0009244">
    <property type="term" value="P:lipopolysaccharide core region biosynthetic process"/>
    <property type="evidence" value="ECO:0007669"/>
    <property type="project" value="TreeGrafter"/>
</dbReference>
<dbReference type="HAMAP" id="MF_00409">
    <property type="entry name" value="LpxK"/>
    <property type="match status" value="1"/>
</dbReference>
<dbReference type="InterPro" id="IPR003758">
    <property type="entry name" value="LpxK"/>
</dbReference>
<dbReference type="InterPro" id="IPR027417">
    <property type="entry name" value="P-loop_NTPase"/>
</dbReference>
<dbReference type="NCBIfam" id="TIGR00682">
    <property type="entry name" value="lpxK"/>
    <property type="match status" value="1"/>
</dbReference>
<dbReference type="PANTHER" id="PTHR42724">
    <property type="entry name" value="TETRAACYLDISACCHARIDE 4'-KINASE"/>
    <property type="match status" value="1"/>
</dbReference>
<dbReference type="PANTHER" id="PTHR42724:SF1">
    <property type="entry name" value="TETRAACYLDISACCHARIDE 4'-KINASE, MITOCHONDRIAL-RELATED"/>
    <property type="match status" value="1"/>
</dbReference>
<dbReference type="Pfam" id="PF02606">
    <property type="entry name" value="LpxK"/>
    <property type="match status" value="1"/>
</dbReference>
<dbReference type="SUPFAM" id="SSF52540">
    <property type="entry name" value="P-loop containing nucleoside triphosphate hydrolases"/>
    <property type="match status" value="1"/>
</dbReference>
<comment type="function">
    <text evidence="1">Transfers the gamma-phosphate of ATP to the 4'-position of a tetraacyldisaccharide 1-phosphate intermediate (termed DS-1-P) to form tetraacyldisaccharide 1,4'-bis-phosphate (lipid IVA).</text>
</comment>
<comment type="catalytic activity">
    <reaction evidence="1">
        <text>a lipid A disaccharide + ATP = a lipid IVA + ADP + H(+)</text>
        <dbReference type="Rhea" id="RHEA:67840"/>
        <dbReference type="ChEBI" id="CHEBI:15378"/>
        <dbReference type="ChEBI" id="CHEBI:30616"/>
        <dbReference type="ChEBI" id="CHEBI:176343"/>
        <dbReference type="ChEBI" id="CHEBI:176425"/>
        <dbReference type="ChEBI" id="CHEBI:456216"/>
        <dbReference type="EC" id="2.7.1.130"/>
    </reaction>
</comment>
<comment type="pathway">
    <text evidence="1">Glycolipid biosynthesis; lipid IV(A) biosynthesis; lipid IV(A) from (3R)-3-hydroxytetradecanoyl-[acyl-carrier-protein] and UDP-N-acetyl-alpha-D-glucosamine: step 6/6.</text>
</comment>
<comment type="similarity">
    <text evidence="1">Belongs to the LpxK family.</text>
</comment>
<evidence type="ECO:0000255" key="1">
    <source>
        <dbReference type="HAMAP-Rule" id="MF_00409"/>
    </source>
</evidence>
<gene>
    <name evidence="1" type="primary">lpxK</name>
    <name type="ordered locus">A1G_06070</name>
</gene>
<sequence>MIKLLYPEFWQKRNIIAYLLLPISLIYQFLGYLRASLARPIMLPAKVICVGNCSVGGTGKTQIVMYLAKLLKARNVSFVIVTKAYGSNLKSATTIHQGHTALEVGDEGVILAKYGAVIATKNIKEIVPLINELKPDIIIVDDFLQNPYFHKDFTIVSVDSQRLFGNGFLIPAGPLRQYPNKALDAADLIFLVSSHQDKIPQILTPYVNKLINAQIVPSNNIDKTKNYFAFSGIGNPERFFATLKNYGLNITGYKIFPDHYNYLQADLENLYSLAKEHNAILVTTRKDHVKFNDLNNNIVCLDVELSINHPDLLNEKIFKKA</sequence>
<organism>
    <name type="scientific">Rickettsia rickettsii (strain Sheila Smith)</name>
    <dbReference type="NCBI Taxonomy" id="392021"/>
    <lineage>
        <taxon>Bacteria</taxon>
        <taxon>Pseudomonadati</taxon>
        <taxon>Pseudomonadota</taxon>
        <taxon>Alphaproteobacteria</taxon>
        <taxon>Rickettsiales</taxon>
        <taxon>Rickettsiaceae</taxon>
        <taxon>Rickettsieae</taxon>
        <taxon>Rickettsia</taxon>
        <taxon>spotted fever group</taxon>
    </lineage>
</organism>
<accession>A8GTE9</accession>
<keyword id="KW-0067">ATP-binding</keyword>
<keyword id="KW-0418">Kinase</keyword>
<keyword id="KW-0441">Lipid A biosynthesis</keyword>
<keyword id="KW-0444">Lipid biosynthesis</keyword>
<keyword id="KW-0443">Lipid metabolism</keyword>
<keyword id="KW-0547">Nucleotide-binding</keyword>
<keyword id="KW-0808">Transferase</keyword>
<proteinExistence type="inferred from homology"/>